<gene>
    <name evidence="1" type="primary">moaA</name>
    <name type="ordered locus">VS_0985</name>
</gene>
<reference key="1">
    <citation type="submission" date="2009-02" db="EMBL/GenBank/DDBJ databases">
        <title>Vibrio splendidus str. LGP32 complete genome.</title>
        <authorList>
            <person name="Mazel D."/>
            <person name="Le Roux F."/>
        </authorList>
    </citation>
    <scope>NUCLEOTIDE SEQUENCE [LARGE SCALE GENOMIC DNA]</scope>
    <source>
        <strain>LGP32</strain>
    </source>
</reference>
<dbReference type="EC" id="4.1.99.22" evidence="1"/>
<dbReference type="EMBL" id="FM954972">
    <property type="protein sequence ID" value="CAV18019.1"/>
    <property type="molecule type" value="Genomic_DNA"/>
</dbReference>
<dbReference type="SMR" id="B7VLU4"/>
<dbReference type="STRING" id="575788.VS_0985"/>
<dbReference type="KEGG" id="vsp:VS_0985"/>
<dbReference type="eggNOG" id="COG2896">
    <property type="taxonomic scope" value="Bacteria"/>
</dbReference>
<dbReference type="HOGENOM" id="CLU_009273_0_1_6"/>
<dbReference type="UniPathway" id="UPA00344"/>
<dbReference type="Proteomes" id="UP000009100">
    <property type="component" value="Chromosome 1"/>
</dbReference>
<dbReference type="GO" id="GO:0051539">
    <property type="term" value="F:4 iron, 4 sulfur cluster binding"/>
    <property type="evidence" value="ECO:0007669"/>
    <property type="project" value="UniProtKB-UniRule"/>
</dbReference>
<dbReference type="GO" id="GO:0061799">
    <property type="term" value="F:cyclic pyranopterin monophosphate synthase activity"/>
    <property type="evidence" value="ECO:0007669"/>
    <property type="project" value="TreeGrafter"/>
</dbReference>
<dbReference type="GO" id="GO:0061798">
    <property type="term" value="F:GTP 3',8'-cyclase activity"/>
    <property type="evidence" value="ECO:0007669"/>
    <property type="project" value="UniProtKB-UniRule"/>
</dbReference>
<dbReference type="GO" id="GO:0005525">
    <property type="term" value="F:GTP binding"/>
    <property type="evidence" value="ECO:0007669"/>
    <property type="project" value="UniProtKB-UniRule"/>
</dbReference>
<dbReference type="GO" id="GO:0046872">
    <property type="term" value="F:metal ion binding"/>
    <property type="evidence" value="ECO:0007669"/>
    <property type="project" value="UniProtKB-KW"/>
</dbReference>
<dbReference type="GO" id="GO:1904047">
    <property type="term" value="F:S-adenosyl-L-methionine binding"/>
    <property type="evidence" value="ECO:0007669"/>
    <property type="project" value="UniProtKB-UniRule"/>
</dbReference>
<dbReference type="GO" id="GO:0006777">
    <property type="term" value="P:Mo-molybdopterin cofactor biosynthetic process"/>
    <property type="evidence" value="ECO:0007669"/>
    <property type="project" value="UniProtKB-UniRule"/>
</dbReference>
<dbReference type="CDD" id="cd01335">
    <property type="entry name" value="Radical_SAM"/>
    <property type="match status" value="1"/>
</dbReference>
<dbReference type="CDD" id="cd21117">
    <property type="entry name" value="Twitch_MoaA"/>
    <property type="match status" value="1"/>
</dbReference>
<dbReference type="FunFam" id="3.20.20.70:FF:000057">
    <property type="entry name" value="GTP 3',8-cyclase"/>
    <property type="match status" value="1"/>
</dbReference>
<dbReference type="Gene3D" id="3.20.20.70">
    <property type="entry name" value="Aldolase class I"/>
    <property type="match status" value="1"/>
</dbReference>
<dbReference type="HAMAP" id="MF_01225_B">
    <property type="entry name" value="MoaA_B"/>
    <property type="match status" value="1"/>
</dbReference>
<dbReference type="InterPro" id="IPR013785">
    <property type="entry name" value="Aldolase_TIM"/>
</dbReference>
<dbReference type="InterPro" id="IPR006638">
    <property type="entry name" value="Elp3/MiaA/NifB-like_rSAM"/>
</dbReference>
<dbReference type="InterPro" id="IPR013483">
    <property type="entry name" value="MoaA"/>
</dbReference>
<dbReference type="InterPro" id="IPR010505">
    <property type="entry name" value="MoaA_twitch"/>
</dbReference>
<dbReference type="InterPro" id="IPR050105">
    <property type="entry name" value="MoCo_biosynth_MoaA/MoaC"/>
</dbReference>
<dbReference type="InterPro" id="IPR007197">
    <property type="entry name" value="rSAM"/>
</dbReference>
<dbReference type="NCBIfam" id="TIGR02666">
    <property type="entry name" value="moaA"/>
    <property type="match status" value="1"/>
</dbReference>
<dbReference type="PANTHER" id="PTHR22960:SF28">
    <property type="entry name" value="GTP 3',8-CYCLASE"/>
    <property type="match status" value="1"/>
</dbReference>
<dbReference type="PANTHER" id="PTHR22960">
    <property type="entry name" value="MOLYBDOPTERIN COFACTOR SYNTHESIS PROTEIN A"/>
    <property type="match status" value="1"/>
</dbReference>
<dbReference type="Pfam" id="PF13353">
    <property type="entry name" value="Fer4_12"/>
    <property type="match status" value="1"/>
</dbReference>
<dbReference type="Pfam" id="PF06463">
    <property type="entry name" value="Mob_synth_C"/>
    <property type="match status" value="1"/>
</dbReference>
<dbReference type="Pfam" id="PF04055">
    <property type="entry name" value="Radical_SAM"/>
    <property type="match status" value="1"/>
</dbReference>
<dbReference type="SFLD" id="SFLDG01383">
    <property type="entry name" value="cyclic_pyranopterin_phosphate"/>
    <property type="match status" value="1"/>
</dbReference>
<dbReference type="SFLD" id="SFLDG01386">
    <property type="entry name" value="main_SPASM_domain-containing"/>
    <property type="match status" value="1"/>
</dbReference>
<dbReference type="SMART" id="SM00729">
    <property type="entry name" value="Elp3"/>
    <property type="match status" value="1"/>
</dbReference>
<dbReference type="SUPFAM" id="SSF102114">
    <property type="entry name" value="Radical SAM enzymes"/>
    <property type="match status" value="1"/>
</dbReference>
<dbReference type="PROSITE" id="PS51918">
    <property type="entry name" value="RADICAL_SAM"/>
    <property type="match status" value="1"/>
</dbReference>
<accession>B7VLU4</accession>
<name>MOAA_VIBA3</name>
<feature type="chain" id="PRO_1000164921" description="GTP 3',8-cyclase">
    <location>
        <begin position="1"/>
        <end position="334"/>
    </location>
</feature>
<feature type="domain" description="Radical SAM core" evidence="2">
    <location>
        <begin position="13"/>
        <end position="239"/>
    </location>
</feature>
<feature type="binding site" evidence="1">
    <location>
        <position position="22"/>
    </location>
    <ligand>
        <name>GTP</name>
        <dbReference type="ChEBI" id="CHEBI:37565"/>
    </ligand>
</feature>
<feature type="binding site" evidence="1">
    <location>
        <position position="29"/>
    </location>
    <ligand>
        <name>[4Fe-4S] cluster</name>
        <dbReference type="ChEBI" id="CHEBI:49883"/>
        <label>1</label>
        <note>4Fe-4S-S-AdoMet</note>
    </ligand>
</feature>
<feature type="binding site" evidence="1">
    <location>
        <position position="33"/>
    </location>
    <ligand>
        <name>[4Fe-4S] cluster</name>
        <dbReference type="ChEBI" id="CHEBI:49883"/>
        <label>1</label>
        <note>4Fe-4S-S-AdoMet</note>
    </ligand>
</feature>
<feature type="binding site" evidence="1">
    <location>
        <position position="35"/>
    </location>
    <ligand>
        <name>S-adenosyl-L-methionine</name>
        <dbReference type="ChEBI" id="CHEBI:59789"/>
    </ligand>
</feature>
<feature type="binding site" evidence="1">
    <location>
        <position position="36"/>
    </location>
    <ligand>
        <name>[4Fe-4S] cluster</name>
        <dbReference type="ChEBI" id="CHEBI:49883"/>
        <label>1</label>
        <note>4Fe-4S-S-AdoMet</note>
    </ligand>
</feature>
<feature type="binding site" evidence="1">
    <location>
        <position position="73"/>
    </location>
    <ligand>
        <name>GTP</name>
        <dbReference type="ChEBI" id="CHEBI:37565"/>
    </ligand>
</feature>
<feature type="binding site" evidence="1">
    <location>
        <position position="77"/>
    </location>
    <ligand>
        <name>S-adenosyl-L-methionine</name>
        <dbReference type="ChEBI" id="CHEBI:59789"/>
    </ligand>
</feature>
<feature type="binding site" evidence="1">
    <location>
        <position position="104"/>
    </location>
    <ligand>
        <name>GTP</name>
        <dbReference type="ChEBI" id="CHEBI:37565"/>
    </ligand>
</feature>
<feature type="binding site" evidence="1">
    <location>
        <position position="128"/>
    </location>
    <ligand>
        <name>S-adenosyl-L-methionine</name>
        <dbReference type="ChEBI" id="CHEBI:59789"/>
    </ligand>
</feature>
<feature type="binding site" evidence="1">
    <location>
        <position position="165"/>
    </location>
    <ligand>
        <name>GTP</name>
        <dbReference type="ChEBI" id="CHEBI:37565"/>
    </ligand>
</feature>
<feature type="binding site" evidence="1">
    <location>
        <position position="199"/>
    </location>
    <ligand>
        <name>S-adenosyl-L-methionine</name>
        <dbReference type="ChEBI" id="CHEBI:59789"/>
    </ligand>
</feature>
<feature type="binding site" evidence="1">
    <location>
        <position position="262"/>
    </location>
    <ligand>
        <name>[4Fe-4S] cluster</name>
        <dbReference type="ChEBI" id="CHEBI:49883"/>
        <label>2</label>
        <note>4Fe-4S-substrate</note>
    </ligand>
</feature>
<feature type="binding site" evidence="1">
    <location>
        <position position="265"/>
    </location>
    <ligand>
        <name>[4Fe-4S] cluster</name>
        <dbReference type="ChEBI" id="CHEBI:49883"/>
        <label>2</label>
        <note>4Fe-4S-substrate</note>
    </ligand>
</feature>
<feature type="binding site" evidence="1">
    <location>
        <begin position="267"/>
        <end position="269"/>
    </location>
    <ligand>
        <name>GTP</name>
        <dbReference type="ChEBI" id="CHEBI:37565"/>
    </ligand>
</feature>
<feature type="binding site" evidence="1">
    <location>
        <position position="279"/>
    </location>
    <ligand>
        <name>[4Fe-4S] cluster</name>
        <dbReference type="ChEBI" id="CHEBI:49883"/>
        <label>2</label>
        <note>4Fe-4S-substrate</note>
    </ligand>
</feature>
<sequence length="334" mass="37801">MERCSVAQQFEDRFHRKFYYLRLSVTDVCNFKCTYCLPDGYKPSGQKNSSFLSVPEIKRVVKAFADCGTSKIRITGGEPSLRKDFPEIIHTVASTPGIEKVATTTNGYRMEKQVGQWRDAGLTHINVSVDSLDSRMFHQITGENKFTEVMRGIDKAFEVGFEQVKVNVVLMKDLNSQELPAFLNWIKDKPIQLRFIELMKTGEMDELFDKHHVSGVAIRNQLIANGWLLKVKAVNDGPAQVFVHPDYQGEIGLIMPYEKDFCESCNRLRVSATGKLHLCLFGDHGVELRDLIQEDQQEQELIDRIQAQLQTKSVSHFLHDGNSGMTPNLASIGG</sequence>
<organism>
    <name type="scientific">Vibrio atlanticus (strain LGP32)</name>
    <name type="common">Vibrio splendidus (strain Mel32)</name>
    <dbReference type="NCBI Taxonomy" id="575788"/>
    <lineage>
        <taxon>Bacteria</taxon>
        <taxon>Pseudomonadati</taxon>
        <taxon>Pseudomonadota</taxon>
        <taxon>Gammaproteobacteria</taxon>
        <taxon>Vibrionales</taxon>
        <taxon>Vibrionaceae</taxon>
        <taxon>Vibrio</taxon>
    </lineage>
</organism>
<keyword id="KW-0004">4Fe-4S</keyword>
<keyword id="KW-0342">GTP-binding</keyword>
<keyword id="KW-0408">Iron</keyword>
<keyword id="KW-0411">Iron-sulfur</keyword>
<keyword id="KW-0456">Lyase</keyword>
<keyword id="KW-0479">Metal-binding</keyword>
<keyword id="KW-0501">Molybdenum cofactor biosynthesis</keyword>
<keyword id="KW-0547">Nucleotide-binding</keyword>
<keyword id="KW-0949">S-adenosyl-L-methionine</keyword>
<protein>
    <recommendedName>
        <fullName evidence="1">GTP 3',8-cyclase</fullName>
        <ecNumber evidence="1">4.1.99.22</ecNumber>
    </recommendedName>
    <alternativeName>
        <fullName evidence="1">Molybdenum cofactor biosynthesis protein A</fullName>
    </alternativeName>
</protein>
<evidence type="ECO:0000255" key="1">
    <source>
        <dbReference type="HAMAP-Rule" id="MF_01225"/>
    </source>
</evidence>
<evidence type="ECO:0000255" key="2">
    <source>
        <dbReference type="PROSITE-ProRule" id="PRU01266"/>
    </source>
</evidence>
<proteinExistence type="inferred from homology"/>
<comment type="function">
    <text evidence="1">Catalyzes the cyclization of GTP to (8S)-3',8-cyclo-7,8-dihydroguanosine 5'-triphosphate.</text>
</comment>
<comment type="catalytic activity">
    <reaction evidence="1">
        <text>GTP + AH2 + S-adenosyl-L-methionine = (8S)-3',8-cyclo-7,8-dihydroguanosine 5'-triphosphate + 5'-deoxyadenosine + L-methionine + A + H(+)</text>
        <dbReference type="Rhea" id="RHEA:49576"/>
        <dbReference type="ChEBI" id="CHEBI:13193"/>
        <dbReference type="ChEBI" id="CHEBI:15378"/>
        <dbReference type="ChEBI" id="CHEBI:17319"/>
        <dbReference type="ChEBI" id="CHEBI:17499"/>
        <dbReference type="ChEBI" id="CHEBI:37565"/>
        <dbReference type="ChEBI" id="CHEBI:57844"/>
        <dbReference type="ChEBI" id="CHEBI:59789"/>
        <dbReference type="ChEBI" id="CHEBI:131766"/>
        <dbReference type="EC" id="4.1.99.22"/>
    </reaction>
</comment>
<comment type="cofactor">
    <cofactor evidence="1">
        <name>[4Fe-4S] cluster</name>
        <dbReference type="ChEBI" id="CHEBI:49883"/>
    </cofactor>
    <text evidence="1">Binds 2 [4Fe-4S] clusters. Binds 1 [4Fe-4S] cluster coordinated with 3 cysteines and an exchangeable S-adenosyl-L-methionine and 1 [4Fe-4S] cluster coordinated with 3 cysteines and the GTP-derived substrate.</text>
</comment>
<comment type="pathway">
    <text evidence="1">Cofactor biosynthesis; molybdopterin biosynthesis.</text>
</comment>
<comment type="subunit">
    <text evidence="1">Monomer and homodimer.</text>
</comment>
<comment type="similarity">
    <text evidence="1">Belongs to the radical SAM superfamily. MoaA family.</text>
</comment>